<feature type="signal peptide" evidence="2">
    <location>
        <begin position="1"/>
        <end position="21"/>
    </location>
</feature>
<feature type="chain" id="PRO_0000008554" description="Esterase-5A">
    <location>
        <begin position="22"/>
        <end position="548"/>
    </location>
</feature>
<feature type="active site" description="Acyl-ester intermediate" evidence="3">
    <location>
        <position position="210"/>
    </location>
</feature>
<feature type="glycosylation site" description="N-linked (GlcNAc...) asparagine" evidence="2">
    <location>
        <position position="95"/>
    </location>
</feature>
<feature type="glycosylation site" description="N-linked (GlcNAc...) asparagine" evidence="2">
    <location>
        <position position="116"/>
    </location>
</feature>
<feature type="glycosylation site" description="N-linked (GlcNAc...) asparagine" evidence="2">
    <location>
        <position position="479"/>
    </location>
</feature>
<feature type="disulfide bond" evidence="1">
    <location>
        <begin position="87"/>
        <end position="106"/>
    </location>
</feature>
<feature type="disulfide bond" evidence="1">
    <location>
        <begin position="262"/>
        <end position="274"/>
    </location>
</feature>
<feature type="disulfide bond" evidence="2">
    <location>
        <begin position="518"/>
        <end position="539"/>
    </location>
</feature>
<feature type="sequence variant" description="In strain: GB4E, GB8E, GB139E and GB336E." evidence="4 5">
    <original>V</original>
    <variation>I</variation>
    <location>
        <position position="15"/>
    </location>
</feature>
<feature type="sequence variant" description="In strain: GB4E, GB8E, GB139E and GB336E." evidence="4 5">
    <location>
        <position position="26"/>
    </location>
</feature>
<feature type="sequence variant" description="In strain: GB4E, GB8E, GB115E, GB139E, GB336E, JR198E and JR341E." evidence="4 5">
    <original>S</original>
    <variation>G</variation>
    <location>
        <position position="139"/>
    </location>
</feature>
<feature type="sequence variant" description="In strain: GB4E, GB8E, GB139E, JR50E and JR198E." evidence="4 5">
    <original>S</original>
    <variation>T</variation>
    <location>
        <position position="226"/>
    </location>
</feature>
<feature type="sequence variant" description="In strain: GB4E, GB8E, GB115E, GB139E, GB336E, JR50E and JR198E." evidence="4 5">
    <original>L</original>
    <variation>V</variation>
    <location>
        <position position="228"/>
    </location>
</feature>
<feature type="sequence variant" description="In strain: GB336E." evidence="5">
    <original>V</original>
    <variation>L</variation>
    <location>
        <position position="260"/>
    </location>
</feature>
<feature type="sequence variant" description="In strain: JR341E." evidence="5">
    <original>S</original>
    <variation>N</variation>
    <location>
        <position position="266"/>
    </location>
</feature>
<feature type="sequence variant" description="In strain: GB336E." evidence="5">
    <original>G</original>
    <variation>L</variation>
    <location>
        <position position="269"/>
    </location>
</feature>
<feature type="sequence variant" description="In strain: GB4E, GB8E, GB115E, GB139E, JR198E and JR341E." evidence="4 5">
    <original>G</original>
    <variation>V</variation>
    <location>
        <position position="269"/>
    </location>
</feature>
<feature type="sequence variant" description="In strain: JR341E." evidence="5">
    <original>I</original>
    <variation>S</variation>
    <location>
        <position position="281"/>
    </location>
</feature>
<feature type="sequence variant" description="In strain: GB115E." evidence="5">
    <original>S</original>
    <variation>T</variation>
    <location>
        <position position="307"/>
    </location>
</feature>
<feature type="sequence variant" description="In strain: JR198E." evidence="5">
    <original>K</original>
    <variation>M</variation>
    <location>
        <position position="327"/>
    </location>
</feature>
<feature type="sequence variant" description="In strain: JR198E." evidence="5">
    <original>Q</original>
    <variation>K</variation>
    <location>
        <position position="330"/>
    </location>
</feature>
<feature type="sequence variant" description="In strain: GB139E." evidence="5">
    <original>S</original>
    <variation>T</variation>
    <location>
        <position position="355"/>
    </location>
</feature>
<feature type="sequence variant" description="In strain: JR341E." evidence="5">
    <original>Y</original>
    <variation>F</variation>
    <location>
        <position position="442"/>
    </location>
</feature>
<feature type="sequence variant" description="In strain: JR341E." evidence="5">
    <original>E</original>
    <variation>D</variation>
    <location>
        <position position="451"/>
    </location>
</feature>
<feature type="sequence variant" description="In strain: JR198E." evidence="5">
    <original>Q</original>
    <variation>H</variation>
    <location>
        <position position="456"/>
    </location>
</feature>
<feature type="sequence variant" description="In strain: GB336E." evidence="5">
    <original>R</original>
    <variation>S</variation>
    <location>
        <position position="487"/>
    </location>
</feature>
<feature type="sequence variant" description="In strain: GB139E and JR50E." evidence="5">
    <original>C</original>
    <variation>F</variation>
    <location>
        <position position="546"/>
    </location>
</feature>
<feature type="sequence conflict" description="In Ref. 1; AAA28516." evidence="6" ref="1">
    <original>A</original>
    <variation>L</variation>
    <location>
        <position position="334"/>
    </location>
</feature>
<feature type="sequence conflict" description="In Ref. 1; AAA28516." evidence="6" ref="1">
    <original>GTVH</original>
    <variation>D</variation>
    <location>
        <begin position="467"/>
        <end position="470"/>
    </location>
</feature>
<dbReference type="EC" id="3.1.1.1"/>
<dbReference type="EMBL" id="M55908">
    <property type="protein sequence ID" value="AAA28516.1"/>
    <property type="molecule type" value="Genomic_DNA"/>
</dbReference>
<dbReference type="EMBL" id="AF016135">
    <property type="protein sequence ID" value="AAB70225.1"/>
    <property type="molecule type" value="Genomic_DNA"/>
</dbReference>
<dbReference type="EMBL" id="AF016136">
    <property type="protein sequence ID" value="AAB70226.1"/>
    <property type="molecule type" value="Genomic_DNA"/>
</dbReference>
<dbReference type="EMBL" id="AF016137">
    <property type="protein sequence ID" value="AAB70227.1"/>
    <property type="molecule type" value="Genomic_DNA"/>
</dbReference>
<dbReference type="EMBL" id="AF016138">
    <property type="protein sequence ID" value="AAB70228.1"/>
    <property type="molecule type" value="Genomic_DNA"/>
</dbReference>
<dbReference type="EMBL" id="AF016139">
    <property type="protein sequence ID" value="AAB70229.1"/>
    <property type="molecule type" value="Genomic_DNA"/>
</dbReference>
<dbReference type="EMBL" id="AF016140">
    <property type="protein sequence ID" value="AAB70230.1"/>
    <property type="molecule type" value="Genomic_DNA"/>
</dbReference>
<dbReference type="EMBL" id="AF016141">
    <property type="protein sequence ID" value="AAB70231.1"/>
    <property type="molecule type" value="Genomic_DNA"/>
</dbReference>
<dbReference type="EMBL" id="AF016142">
    <property type="protein sequence ID" value="AAB70232.1"/>
    <property type="molecule type" value="Genomic_DNA"/>
</dbReference>
<dbReference type="EMBL" id="CH379069">
    <property type="protein sequence ID" value="EDY73464.1"/>
    <property type="status" value="ALT_SEQ"/>
    <property type="molecule type" value="Genomic_DNA"/>
</dbReference>
<dbReference type="SMR" id="P25727"/>
<dbReference type="FunCoup" id="P25727">
    <property type="interactions" value="95"/>
</dbReference>
<dbReference type="STRING" id="46245.P25727"/>
<dbReference type="ESTHER" id="drops-est5a">
    <property type="family name" value="Carb_B_Arthropoda"/>
</dbReference>
<dbReference type="MEROPS" id="S09.947"/>
<dbReference type="GlyCosmos" id="P25727">
    <property type="glycosylation" value="3 sites, No reported glycans"/>
</dbReference>
<dbReference type="eggNOG" id="KOG1516">
    <property type="taxonomic scope" value="Eukaryota"/>
</dbReference>
<dbReference type="InParanoid" id="P25727"/>
<dbReference type="Proteomes" id="UP000001819">
    <property type="component" value="Unplaced"/>
</dbReference>
<dbReference type="GO" id="GO:0005576">
    <property type="term" value="C:extracellular region"/>
    <property type="evidence" value="ECO:0007669"/>
    <property type="project" value="UniProtKB-SubCell"/>
</dbReference>
<dbReference type="GO" id="GO:0106435">
    <property type="term" value="F:carboxylesterase activity"/>
    <property type="evidence" value="ECO:0007669"/>
    <property type="project" value="UniProtKB-EC"/>
</dbReference>
<dbReference type="CDD" id="cd00312">
    <property type="entry name" value="Esterase_lipase"/>
    <property type="match status" value="1"/>
</dbReference>
<dbReference type="FunFam" id="3.40.50.1820:FF:000378">
    <property type="entry name" value="Carboxylic ester hydrolase"/>
    <property type="match status" value="1"/>
</dbReference>
<dbReference type="Gene3D" id="3.40.50.1820">
    <property type="entry name" value="alpha/beta hydrolase"/>
    <property type="match status" value="1"/>
</dbReference>
<dbReference type="InterPro" id="IPR029058">
    <property type="entry name" value="AB_hydrolase_fold"/>
</dbReference>
<dbReference type="InterPro" id="IPR002018">
    <property type="entry name" value="CarbesteraseB"/>
</dbReference>
<dbReference type="InterPro" id="IPR019826">
    <property type="entry name" value="Carboxylesterase_B_AS"/>
</dbReference>
<dbReference type="InterPro" id="IPR019819">
    <property type="entry name" value="Carboxylesterase_B_CS"/>
</dbReference>
<dbReference type="PANTHER" id="PTHR43142">
    <property type="entry name" value="CARBOXYLIC ESTER HYDROLASE"/>
    <property type="match status" value="1"/>
</dbReference>
<dbReference type="PANTHER" id="PTHR43142:SF1">
    <property type="entry name" value="CARBOXYLIC ESTER HYDROLASE"/>
    <property type="match status" value="1"/>
</dbReference>
<dbReference type="Pfam" id="PF00135">
    <property type="entry name" value="COesterase"/>
    <property type="match status" value="1"/>
</dbReference>
<dbReference type="SUPFAM" id="SSF53474">
    <property type="entry name" value="alpha/beta-Hydrolases"/>
    <property type="match status" value="1"/>
</dbReference>
<dbReference type="PROSITE" id="PS00122">
    <property type="entry name" value="CARBOXYLESTERASE_B_1"/>
    <property type="match status" value="1"/>
</dbReference>
<dbReference type="PROSITE" id="PS00941">
    <property type="entry name" value="CARBOXYLESTERASE_B_2"/>
    <property type="match status" value="1"/>
</dbReference>
<proteinExistence type="inferred from homology"/>
<accession>P25727</accession>
<accession>B5DQP1</accession>
<accession>O16174</accession>
<accession>O16175</accession>
<accession>O16176</accession>
<accession>O16177</accession>
<accession>O16178</accession>
<accession>O16179</accession>
<accession>O18663</accession>
<sequence length="548" mass="61376">MHLVRWLICLIQLWVQLGAAGSVTLLDPLLIEIPNGKLRGRDNGHYYSYEAIPYAEPPTGELRFEVPKPYKQQWTNTFDATQPPVLCMQWNQFINGTNKLLGVEDCLTVSVYRPKNSSRNNFPVVANLHGGAFMFGGPSQYGHENIMREGSVILVTIGYRLGPLGFVSTGDADLSGNFGLKDQRLALLWIKQNIASFGGEPENILVVGHSAGGASVHLQMLREDFSKLAKAAISFSGNALDPWVIQQGLRGRAFELGRIVGCGQASDSGTLKKCLKSKPAIEIVSAVRSFLVFSYVPFTPFGPAIESPDAPEAFITQHPIDIIKSGKFSQVPWAVTYTTEDGGYNAALLLEKQASSGRELIVDLNDRWFDWAPYLLFYRDSMTTIKDMDDYSRKLRQEYLGDRRFSVESYWDVQRMFTDLLFKNSVTVSVDLHRKYGKSPVYAFVYDNPSEVGVGQILSGRNDVYFGTVHGDDVFLIFNVSFVPANRRPDEEIISRNFIKMLEYFALSTDDTMAYGDCVFQNNVGSKHMQLLSITRDGCENKQLNCFI</sequence>
<keyword id="KW-1015">Disulfide bond</keyword>
<keyword id="KW-0325">Glycoprotein</keyword>
<keyword id="KW-0378">Hydrolase</keyword>
<keyword id="KW-1185">Reference proteome</keyword>
<keyword id="KW-0964">Secreted</keyword>
<keyword id="KW-0719">Serine esterase</keyword>
<keyword id="KW-0732">Signal</keyword>
<comment type="catalytic activity">
    <reaction evidence="3">
        <text>a carboxylic ester + H2O = an alcohol + a carboxylate + H(+)</text>
        <dbReference type="Rhea" id="RHEA:21164"/>
        <dbReference type="ChEBI" id="CHEBI:15377"/>
        <dbReference type="ChEBI" id="CHEBI:15378"/>
        <dbReference type="ChEBI" id="CHEBI:29067"/>
        <dbReference type="ChEBI" id="CHEBI:30879"/>
        <dbReference type="ChEBI" id="CHEBI:33308"/>
        <dbReference type="EC" id="3.1.1.1"/>
    </reaction>
</comment>
<comment type="subcellular location">
    <subcellularLocation>
        <location>Secreted</location>
    </subcellularLocation>
</comment>
<comment type="similarity">
    <text evidence="6">Belongs to the type-B carboxylesterase/lipase family.</text>
</comment>
<comment type="sequence caution" evidence="6">
    <conflict type="erroneous gene model prediction">
        <sequence resource="EMBL-CDS" id="EDY73464"/>
    </conflict>
</comment>
<name>EST5A_DROPS</name>
<reference key="1">
    <citation type="journal article" date="1990" name="Mol. Biol. Evol.">
        <title>Cloning of the esterase-5 locus from Drosophila pseudoobscura and comparison with its homologue in D. melanogaster.</title>
        <authorList>
            <person name="Brady J.P."/>
            <person name="Richmond R.C."/>
            <person name="Oakeshott J.G."/>
        </authorList>
    </citation>
    <scope>NUCLEOTIDE SEQUENCE [GENOMIC DNA]</scope>
    <scope>VARIANTS ILE-15; LEU-26 DEL; GLY-139; THR-226; VAL-228 AND VAL-269</scope>
</reference>
<reference key="2">
    <citation type="journal article" date="1998" name="Genetics">
        <title>The role of gene conversion in determining sequence variation and divergence in the Est-5 gene family in Drosophila pseudoobscura.</title>
        <authorList>
            <person name="King L.M."/>
        </authorList>
    </citation>
    <scope>NUCLEOTIDE SEQUENCE [GENOMIC DNA]</scope>
    <scope>VARIANTS ILE-15; LEU-26 DEL; GLY-139; THR-226; VAL-228; LEU-260; ASN-266; LEU-269; VAL-269; SER-281; THR-307; MET-327; LYS-330; THR-355; PHE-442; ASP-451; HIS-456; SER-487 AND PHE-546</scope>
    <source>
        <strain>GB115E</strain>
        <strain>GB139E</strain>
        <strain>GB336E</strain>
        <strain>GB4E</strain>
        <strain>GB8E</strain>
        <strain>JR198E</strain>
        <strain>JR341E</strain>
        <strain>JR50E</strain>
    </source>
</reference>
<reference key="3">
    <citation type="journal article" date="2005" name="Genome Res.">
        <title>Comparative genome sequencing of Drosophila pseudoobscura: chromosomal, gene, and cis-element evolution.</title>
        <authorList>
            <person name="Richards S."/>
            <person name="Liu Y."/>
            <person name="Bettencourt B.R."/>
            <person name="Hradecky P."/>
            <person name="Letovsky S."/>
            <person name="Nielsen R."/>
            <person name="Thornton K."/>
            <person name="Hubisz M.J."/>
            <person name="Chen R."/>
            <person name="Meisel R.P."/>
            <person name="Couronne O."/>
            <person name="Hua S."/>
            <person name="Smith M.A."/>
            <person name="Zhang P."/>
            <person name="Liu J."/>
            <person name="Bussemaker H.J."/>
            <person name="van Batenburg M.F."/>
            <person name="Howells S.L."/>
            <person name="Scherer S.E."/>
            <person name="Sodergren E."/>
            <person name="Matthews B.B."/>
            <person name="Crosby M.A."/>
            <person name="Schroeder A.J."/>
            <person name="Ortiz-Barrientos D."/>
            <person name="Rives C.M."/>
            <person name="Metzker M.L."/>
            <person name="Muzny D.M."/>
            <person name="Scott G."/>
            <person name="Steffen D."/>
            <person name="Wheeler D.A."/>
            <person name="Worley K.C."/>
            <person name="Havlak P."/>
            <person name="Durbin K.J."/>
            <person name="Egan A."/>
            <person name="Gill R."/>
            <person name="Hume J."/>
            <person name="Morgan M.B."/>
            <person name="Miner G."/>
            <person name="Hamilton C."/>
            <person name="Huang Y."/>
            <person name="Waldron L."/>
            <person name="Verduzco D."/>
            <person name="Clerc-Blankenburg K.P."/>
            <person name="Dubchak I."/>
            <person name="Noor M.A.F."/>
            <person name="Anderson W."/>
            <person name="White K.P."/>
            <person name="Clark A.G."/>
            <person name="Schaeffer S.W."/>
            <person name="Gelbart W.M."/>
            <person name="Weinstock G.M."/>
            <person name="Gibbs R.A."/>
        </authorList>
    </citation>
    <scope>NUCLEOTIDE SEQUENCE [LARGE SCALE GENOMIC DNA]</scope>
    <source>
        <strain>MV2-25 / Tucson 14011-0121.94</strain>
    </source>
</reference>
<gene>
    <name type="primary">Est-5A</name>
    <name type="synonym">Est5A</name>
    <name type="ORF">GA23705</name>
</gene>
<protein>
    <recommendedName>
        <fullName>Esterase-5A</fullName>
        <shortName>Est-5A</shortName>
        <ecNumber>3.1.1.1</ecNumber>
    </recommendedName>
    <alternativeName>
        <fullName>Carboxylic-ester hydrolase 5A</fullName>
        <shortName>Carboxylesterase-5A</shortName>
    </alternativeName>
</protein>
<evidence type="ECO:0000250" key="1"/>
<evidence type="ECO:0000255" key="2"/>
<evidence type="ECO:0000255" key="3">
    <source>
        <dbReference type="PROSITE-ProRule" id="PRU10039"/>
    </source>
</evidence>
<evidence type="ECO:0000269" key="4">
    <source>
    </source>
</evidence>
<evidence type="ECO:0000269" key="5">
    <source>
    </source>
</evidence>
<evidence type="ECO:0000305" key="6"/>
<organism>
    <name type="scientific">Drosophila pseudoobscura pseudoobscura</name>
    <name type="common">Fruit fly</name>
    <dbReference type="NCBI Taxonomy" id="46245"/>
    <lineage>
        <taxon>Eukaryota</taxon>
        <taxon>Metazoa</taxon>
        <taxon>Ecdysozoa</taxon>
        <taxon>Arthropoda</taxon>
        <taxon>Hexapoda</taxon>
        <taxon>Insecta</taxon>
        <taxon>Pterygota</taxon>
        <taxon>Neoptera</taxon>
        <taxon>Endopterygota</taxon>
        <taxon>Diptera</taxon>
        <taxon>Brachycera</taxon>
        <taxon>Muscomorpha</taxon>
        <taxon>Ephydroidea</taxon>
        <taxon>Drosophilidae</taxon>
        <taxon>Drosophila</taxon>
        <taxon>Sophophora</taxon>
    </lineage>
</organism>